<gene>
    <name type="primary">RpL5</name>
    <name type="synonym">yip6</name>
    <name type="ORF">CG17489</name>
</gene>
<comment type="function">
    <text evidence="1">Component of the ribosome, a large ribonucleoprotein complex responsible for the synthesis of proteins in the cell. The small ribosomal subunit (SSU) binds messenger RNAs (mRNAs) and translates the encoded message by selecting cognate aminoacyl-transfer RNA (tRNA) molecules. The large subunit (LSU) contains the ribosomal catalytic site termed the peptidyl transferase center (PTC), which catalyzes the formation of peptide bonds, thereby polymerizing the amino acids delivered by tRNAs into a polypeptide chain. The nascent polypeptides leave the ribosome through a tunnel in the LSU and interact with protein factors that function in enzymatic processing, targeting, and the membrane insertion of nascent chains at the exit of the ribosomal tunnel.</text>
</comment>
<comment type="subunit">
    <text evidence="1 2">Component of the large ribosomal subunit (LSU) (By similarity). Interacts with Fmr1 to form the RNA-induced silencing complex (RISC), a ribonucleoprotein (RNP) complex involved in translation regulation, other components of the complex are Rm62, RpL11, AGO2 and Dcr-1 (PubMed:12368261).</text>
</comment>
<comment type="subcellular location">
    <subcellularLocation>
        <location evidence="1">Cytoplasm</location>
    </subcellularLocation>
    <subcellularLocation>
        <location evidence="1">Nucleus</location>
    </subcellularLocation>
</comment>
<comment type="similarity">
    <text evidence="3">Belongs to the universal ribosomal protein uL18 family.</text>
</comment>
<proteinExistence type="evidence at protein level"/>
<accession>Q9W5R8</accession>
<protein>
    <recommendedName>
        <fullName evidence="3">Large ribosomal subunit protein uL18</fullName>
    </recommendedName>
    <alternativeName>
        <fullName>60S ribosomal protein L5</fullName>
    </alternativeName>
</protein>
<evidence type="ECO:0000250" key="1">
    <source>
        <dbReference type="UniProtKB" id="P26321"/>
    </source>
</evidence>
<evidence type="ECO:0000269" key="2">
    <source>
    </source>
</evidence>
<evidence type="ECO:0000305" key="3"/>
<dbReference type="EMBL" id="AE014134">
    <property type="protein sequence ID" value="EAA46016.1"/>
    <property type="molecule type" value="Genomic_DNA"/>
</dbReference>
<dbReference type="EMBL" id="AE014134">
    <property type="protein sequence ID" value="EAA46019.1"/>
    <property type="molecule type" value="Genomic_DNA"/>
</dbReference>
<dbReference type="EMBL" id="AY071305">
    <property type="protein sequence ID" value="AAL48927.1"/>
    <property type="molecule type" value="mRNA"/>
</dbReference>
<dbReference type="RefSeq" id="NP_001036387.1">
    <property type="nucleotide sequence ID" value="NM_001042922.3"/>
</dbReference>
<dbReference type="RefSeq" id="NP_001036388.1">
    <property type="nucleotide sequence ID" value="NM_001042923.3"/>
</dbReference>
<dbReference type="RefSeq" id="NP_001036390.2">
    <property type="nucleotide sequence ID" value="NM_001042925.3"/>
</dbReference>
<dbReference type="RefSeq" id="NP_001036391.2">
    <property type="nucleotide sequence ID" value="NM_001042926.2"/>
</dbReference>
<dbReference type="PDB" id="4V6W">
    <property type="method" value="EM"/>
    <property type="resolution" value="6.00 A"/>
    <property type="chains" value="CD=1-299"/>
</dbReference>
<dbReference type="PDB" id="6XU6">
    <property type="method" value="EM"/>
    <property type="resolution" value="3.50 A"/>
    <property type="chains" value="CD=8-297"/>
</dbReference>
<dbReference type="PDB" id="6XU7">
    <property type="method" value="EM"/>
    <property type="resolution" value="4.90 A"/>
    <property type="chains" value="CD=8-297"/>
</dbReference>
<dbReference type="PDB" id="6XU8">
    <property type="method" value="EM"/>
    <property type="resolution" value="3.00 A"/>
    <property type="chains" value="CD=8-297"/>
</dbReference>
<dbReference type="PDBsum" id="4V6W"/>
<dbReference type="PDBsum" id="6XU6"/>
<dbReference type="PDBsum" id="6XU7"/>
<dbReference type="PDBsum" id="6XU8"/>
<dbReference type="EMDB" id="EMD-10622"/>
<dbReference type="EMDB" id="EMD-10623"/>
<dbReference type="EMDB" id="EMD-10624"/>
<dbReference type="SMR" id="Q9W5R8"/>
<dbReference type="BioGRID" id="78249">
    <property type="interactions" value="123"/>
</dbReference>
<dbReference type="DIP" id="DIP-17125N"/>
<dbReference type="FunCoup" id="Q9W5R8">
    <property type="interactions" value="1690"/>
</dbReference>
<dbReference type="IntAct" id="Q9W5R8">
    <property type="interactions" value="8"/>
</dbReference>
<dbReference type="STRING" id="7227.FBpp0311121"/>
<dbReference type="PaxDb" id="7227-FBpp0304879"/>
<dbReference type="DNASU" id="3355124"/>
<dbReference type="EnsemblMetazoa" id="FBtr0111129">
    <property type="protein sequence ID" value="FBpp0110421"/>
    <property type="gene ID" value="FBgn0064225"/>
</dbReference>
<dbReference type="EnsemblMetazoa" id="FBtr0111132">
    <property type="protein sequence ID" value="FBpp0110424"/>
    <property type="gene ID" value="FBgn0064225"/>
</dbReference>
<dbReference type="EnsemblMetazoa" id="FBtr0332633">
    <property type="protein sequence ID" value="FBpp0304879"/>
    <property type="gene ID" value="FBgn0064225"/>
</dbReference>
<dbReference type="EnsemblMetazoa" id="FBtr0344793">
    <property type="protein sequence ID" value="FBpp0311121"/>
    <property type="gene ID" value="FBgn0064225"/>
</dbReference>
<dbReference type="GeneID" id="3355124"/>
<dbReference type="KEGG" id="dme:Dmel_CG17489"/>
<dbReference type="AGR" id="FB:FBgn0064225"/>
<dbReference type="CTD" id="6125"/>
<dbReference type="FlyBase" id="FBgn0064225">
    <property type="gene designation" value="RpL5"/>
</dbReference>
<dbReference type="VEuPathDB" id="VectorBase:FBgn0064225"/>
<dbReference type="eggNOG" id="KOG0875">
    <property type="taxonomic scope" value="Eukaryota"/>
</dbReference>
<dbReference type="HOGENOM" id="CLU_056222_1_0_1"/>
<dbReference type="InParanoid" id="Q9W5R8"/>
<dbReference type="OMA" id="IYEAQVE"/>
<dbReference type="OrthoDB" id="1618453at2759"/>
<dbReference type="PhylomeDB" id="Q9W5R8"/>
<dbReference type="Reactome" id="R-DME-156827">
    <property type="pathway name" value="L13a-mediated translational silencing of Ceruloplasmin expression"/>
</dbReference>
<dbReference type="Reactome" id="R-DME-1799339">
    <property type="pathway name" value="SRP-dependent cotranslational protein targeting to membrane"/>
</dbReference>
<dbReference type="Reactome" id="R-DME-72689">
    <property type="pathway name" value="Formation of a pool of free 40S subunits"/>
</dbReference>
<dbReference type="Reactome" id="R-DME-72706">
    <property type="pathway name" value="GTP hydrolysis and joining of the 60S ribosomal subunit"/>
</dbReference>
<dbReference type="Reactome" id="R-DME-975956">
    <property type="pathway name" value="Nonsense Mediated Decay (NMD) independent of the Exon Junction Complex (EJC)"/>
</dbReference>
<dbReference type="Reactome" id="R-DME-975957">
    <property type="pathway name" value="Nonsense Mediated Decay (NMD) enhanced by the Exon Junction Complex (EJC)"/>
</dbReference>
<dbReference type="BioGRID-ORCS" id="3355124">
    <property type="hits" value="0 hits in 1 CRISPR screen"/>
</dbReference>
<dbReference type="ChiTaRS" id="RpL5">
    <property type="organism name" value="fly"/>
</dbReference>
<dbReference type="GenomeRNAi" id="3355124"/>
<dbReference type="PRO" id="PR:Q9W5R8"/>
<dbReference type="Proteomes" id="UP000000803">
    <property type="component" value="Chromosome 2L"/>
</dbReference>
<dbReference type="Bgee" id="FBgn0064225">
    <property type="expression patterns" value="Expressed in seminal fluid secreting gland and 279 other cell types or tissues"/>
</dbReference>
<dbReference type="ExpressionAtlas" id="Q9W5R8">
    <property type="expression patterns" value="baseline and differential"/>
</dbReference>
<dbReference type="GO" id="GO:0022625">
    <property type="term" value="C:cytosolic large ribosomal subunit"/>
    <property type="evidence" value="ECO:0000318"/>
    <property type="project" value="GO_Central"/>
</dbReference>
<dbReference type="GO" id="GO:0022626">
    <property type="term" value="C:cytosolic ribosome"/>
    <property type="evidence" value="ECO:0000314"/>
    <property type="project" value="FlyBase"/>
</dbReference>
<dbReference type="GO" id="GO:0005634">
    <property type="term" value="C:nucleus"/>
    <property type="evidence" value="ECO:0007669"/>
    <property type="project" value="UniProtKB-SubCell"/>
</dbReference>
<dbReference type="GO" id="GO:0008097">
    <property type="term" value="F:5S rRNA binding"/>
    <property type="evidence" value="ECO:0000318"/>
    <property type="project" value="GO_Central"/>
</dbReference>
<dbReference type="GO" id="GO:0003723">
    <property type="term" value="F:RNA binding"/>
    <property type="evidence" value="ECO:0000250"/>
    <property type="project" value="UniProtKB"/>
</dbReference>
<dbReference type="GO" id="GO:0003735">
    <property type="term" value="F:structural constituent of ribosome"/>
    <property type="evidence" value="ECO:0000314"/>
    <property type="project" value="FlyBase"/>
</dbReference>
<dbReference type="GO" id="GO:0002181">
    <property type="term" value="P:cytoplasmic translation"/>
    <property type="evidence" value="ECO:0000304"/>
    <property type="project" value="FlyBase"/>
</dbReference>
<dbReference type="GO" id="GO:0000027">
    <property type="term" value="P:ribosomal large subunit assembly"/>
    <property type="evidence" value="ECO:0000250"/>
    <property type="project" value="UniProtKB"/>
</dbReference>
<dbReference type="CDD" id="cd00432">
    <property type="entry name" value="Ribosomal_L18_L5e"/>
    <property type="match status" value="1"/>
</dbReference>
<dbReference type="FunFam" id="3.30.420.100:FF:000002">
    <property type="entry name" value="60S ribosomal protein L5"/>
    <property type="match status" value="1"/>
</dbReference>
<dbReference type="Gene3D" id="3.30.420.100">
    <property type="match status" value="1"/>
</dbReference>
<dbReference type="HAMAP" id="MF_01337_A">
    <property type="entry name" value="Ribosomal_uL18_A"/>
    <property type="match status" value="1"/>
</dbReference>
<dbReference type="InterPro" id="IPR005485">
    <property type="entry name" value="Rbsml_uL18_euk"/>
</dbReference>
<dbReference type="InterPro" id="IPR025607">
    <property type="entry name" value="Ribosomal_uL18_C_euk"/>
</dbReference>
<dbReference type="PANTHER" id="PTHR23410:SF12">
    <property type="entry name" value="LARGE RIBOSOMAL SUBUNIT PROTEIN UL18"/>
    <property type="match status" value="1"/>
</dbReference>
<dbReference type="PANTHER" id="PTHR23410">
    <property type="entry name" value="RIBOSOMAL PROTEIN L5-RELATED"/>
    <property type="match status" value="1"/>
</dbReference>
<dbReference type="Pfam" id="PF14204">
    <property type="entry name" value="Ribosomal_L18_c"/>
    <property type="match status" value="1"/>
</dbReference>
<dbReference type="Pfam" id="PF17144">
    <property type="entry name" value="Ribosomal_L5e"/>
    <property type="match status" value="1"/>
</dbReference>
<dbReference type="PRINTS" id="PR00058">
    <property type="entry name" value="RIBOSOMALL5"/>
</dbReference>
<dbReference type="SUPFAM" id="SSF53137">
    <property type="entry name" value="Translational machinery components"/>
    <property type="match status" value="1"/>
</dbReference>
<reference key="1">
    <citation type="journal article" date="2000" name="Science">
        <title>The genome sequence of Drosophila melanogaster.</title>
        <authorList>
            <person name="Adams M.D."/>
            <person name="Celniker S.E."/>
            <person name="Holt R.A."/>
            <person name="Evans C.A."/>
            <person name="Gocayne J.D."/>
            <person name="Amanatides P.G."/>
            <person name="Scherer S.E."/>
            <person name="Li P.W."/>
            <person name="Hoskins R.A."/>
            <person name="Galle R.F."/>
            <person name="George R.A."/>
            <person name="Lewis S.E."/>
            <person name="Richards S."/>
            <person name="Ashburner M."/>
            <person name="Henderson S.N."/>
            <person name="Sutton G.G."/>
            <person name="Wortman J.R."/>
            <person name="Yandell M.D."/>
            <person name="Zhang Q."/>
            <person name="Chen L.X."/>
            <person name="Brandon R.C."/>
            <person name="Rogers Y.-H.C."/>
            <person name="Blazej R.G."/>
            <person name="Champe M."/>
            <person name="Pfeiffer B.D."/>
            <person name="Wan K.H."/>
            <person name="Doyle C."/>
            <person name="Baxter E.G."/>
            <person name="Helt G."/>
            <person name="Nelson C.R."/>
            <person name="Miklos G.L.G."/>
            <person name="Abril J.F."/>
            <person name="Agbayani A."/>
            <person name="An H.-J."/>
            <person name="Andrews-Pfannkoch C."/>
            <person name="Baldwin D."/>
            <person name="Ballew R.M."/>
            <person name="Basu A."/>
            <person name="Baxendale J."/>
            <person name="Bayraktaroglu L."/>
            <person name="Beasley E.M."/>
            <person name="Beeson K.Y."/>
            <person name="Benos P.V."/>
            <person name="Berman B.P."/>
            <person name="Bhandari D."/>
            <person name="Bolshakov S."/>
            <person name="Borkova D."/>
            <person name="Botchan M.R."/>
            <person name="Bouck J."/>
            <person name="Brokstein P."/>
            <person name="Brottier P."/>
            <person name="Burtis K.C."/>
            <person name="Busam D.A."/>
            <person name="Butler H."/>
            <person name="Cadieu E."/>
            <person name="Center A."/>
            <person name="Chandra I."/>
            <person name="Cherry J.M."/>
            <person name="Cawley S."/>
            <person name="Dahlke C."/>
            <person name="Davenport L.B."/>
            <person name="Davies P."/>
            <person name="de Pablos B."/>
            <person name="Delcher A."/>
            <person name="Deng Z."/>
            <person name="Mays A.D."/>
            <person name="Dew I."/>
            <person name="Dietz S.M."/>
            <person name="Dodson K."/>
            <person name="Doup L.E."/>
            <person name="Downes M."/>
            <person name="Dugan-Rocha S."/>
            <person name="Dunkov B.C."/>
            <person name="Dunn P."/>
            <person name="Durbin K.J."/>
            <person name="Evangelista C.C."/>
            <person name="Ferraz C."/>
            <person name="Ferriera S."/>
            <person name="Fleischmann W."/>
            <person name="Fosler C."/>
            <person name="Gabrielian A.E."/>
            <person name="Garg N.S."/>
            <person name="Gelbart W.M."/>
            <person name="Glasser K."/>
            <person name="Glodek A."/>
            <person name="Gong F."/>
            <person name="Gorrell J.H."/>
            <person name="Gu Z."/>
            <person name="Guan P."/>
            <person name="Harris M."/>
            <person name="Harris N.L."/>
            <person name="Harvey D.A."/>
            <person name="Heiman T.J."/>
            <person name="Hernandez J.R."/>
            <person name="Houck J."/>
            <person name="Hostin D."/>
            <person name="Houston K.A."/>
            <person name="Howland T.J."/>
            <person name="Wei M.-H."/>
            <person name="Ibegwam C."/>
            <person name="Jalali M."/>
            <person name="Kalush F."/>
            <person name="Karpen G.H."/>
            <person name="Ke Z."/>
            <person name="Kennison J.A."/>
            <person name="Ketchum K.A."/>
            <person name="Kimmel B.E."/>
            <person name="Kodira C.D."/>
            <person name="Kraft C.L."/>
            <person name="Kravitz S."/>
            <person name="Kulp D."/>
            <person name="Lai Z."/>
            <person name="Lasko P."/>
            <person name="Lei Y."/>
            <person name="Levitsky A.A."/>
            <person name="Li J.H."/>
            <person name="Li Z."/>
            <person name="Liang Y."/>
            <person name="Lin X."/>
            <person name="Liu X."/>
            <person name="Mattei B."/>
            <person name="McIntosh T.C."/>
            <person name="McLeod M.P."/>
            <person name="McPherson D."/>
            <person name="Merkulov G."/>
            <person name="Milshina N.V."/>
            <person name="Mobarry C."/>
            <person name="Morris J."/>
            <person name="Moshrefi A."/>
            <person name="Mount S.M."/>
            <person name="Moy M."/>
            <person name="Murphy B."/>
            <person name="Murphy L."/>
            <person name="Muzny D.M."/>
            <person name="Nelson D.L."/>
            <person name="Nelson D.R."/>
            <person name="Nelson K.A."/>
            <person name="Nixon K."/>
            <person name="Nusskern D.R."/>
            <person name="Pacleb J.M."/>
            <person name="Palazzolo M."/>
            <person name="Pittman G.S."/>
            <person name="Pan S."/>
            <person name="Pollard J."/>
            <person name="Puri V."/>
            <person name="Reese M.G."/>
            <person name="Reinert K."/>
            <person name="Remington K."/>
            <person name="Saunders R.D.C."/>
            <person name="Scheeler F."/>
            <person name="Shen H."/>
            <person name="Shue B.C."/>
            <person name="Siden-Kiamos I."/>
            <person name="Simpson M."/>
            <person name="Skupski M.P."/>
            <person name="Smith T.J."/>
            <person name="Spier E."/>
            <person name="Spradling A.C."/>
            <person name="Stapleton M."/>
            <person name="Strong R."/>
            <person name="Sun E."/>
            <person name="Svirskas R."/>
            <person name="Tector C."/>
            <person name="Turner R."/>
            <person name="Venter E."/>
            <person name="Wang A.H."/>
            <person name="Wang X."/>
            <person name="Wang Z.-Y."/>
            <person name="Wassarman D.A."/>
            <person name="Weinstock G.M."/>
            <person name="Weissenbach J."/>
            <person name="Williams S.M."/>
            <person name="Woodage T."/>
            <person name="Worley K.C."/>
            <person name="Wu D."/>
            <person name="Yang S."/>
            <person name="Yao Q.A."/>
            <person name="Ye J."/>
            <person name="Yeh R.-F."/>
            <person name="Zaveri J.S."/>
            <person name="Zhan M."/>
            <person name="Zhang G."/>
            <person name="Zhao Q."/>
            <person name="Zheng L."/>
            <person name="Zheng X.H."/>
            <person name="Zhong F.N."/>
            <person name="Zhong W."/>
            <person name="Zhou X."/>
            <person name="Zhu S.C."/>
            <person name="Zhu X."/>
            <person name="Smith H.O."/>
            <person name="Gibbs R.A."/>
            <person name="Myers E.W."/>
            <person name="Rubin G.M."/>
            <person name="Venter J.C."/>
        </authorList>
    </citation>
    <scope>NUCLEOTIDE SEQUENCE [LARGE SCALE GENOMIC DNA]</scope>
    <source>
        <strain>Berkeley</strain>
    </source>
</reference>
<reference key="2">
    <citation type="journal article" date="2002" name="Genome Biol.">
        <title>Annotation of the Drosophila melanogaster euchromatic genome: a systematic review.</title>
        <authorList>
            <person name="Misra S."/>
            <person name="Crosby M.A."/>
            <person name="Mungall C.J."/>
            <person name="Matthews B.B."/>
            <person name="Campbell K.S."/>
            <person name="Hradecky P."/>
            <person name="Huang Y."/>
            <person name="Kaminker J.S."/>
            <person name="Millburn G.H."/>
            <person name="Prochnik S.E."/>
            <person name="Smith C.D."/>
            <person name="Tupy J.L."/>
            <person name="Whitfield E.J."/>
            <person name="Bayraktaroglu L."/>
            <person name="Berman B.P."/>
            <person name="Bettencourt B.R."/>
            <person name="Celniker S.E."/>
            <person name="de Grey A.D.N.J."/>
            <person name="Drysdale R.A."/>
            <person name="Harris N.L."/>
            <person name="Richter J."/>
            <person name="Russo S."/>
            <person name="Schroeder A.J."/>
            <person name="Shu S.Q."/>
            <person name="Stapleton M."/>
            <person name="Yamada C."/>
            <person name="Ashburner M."/>
            <person name="Gelbart W.M."/>
            <person name="Rubin G.M."/>
            <person name="Lewis S.E."/>
        </authorList>
    </citation>
    <scope>GENOME REANNOTATION</scope>
    <source>
        <strain>Berkeley</strain>
    </source>
</reference>
<reference key="3">
    <citation type="journal article" date="2002" name="Genome Biol.">
        <title>A Drosophila full-length cDNA resource.</title>
        <authorList>
            <person name="Stapleton M."/>
            <person name="Carlson J.W."/>
            <person name="Brokstein P."/>
            <person name="Yu C."/>
            <person name="Champe M."/>
            <person name="George R.A."/>
            <person name="Guarin H."/>
            <person name="Kronmiller B."/>
            <person name="Pacleb J.M."/>
            <person name="Park S."/>
            <person name="Wan K.H."/>
            <person name="Rubin G.M."/>
            <person name="Celniker S.E."/>
        </authorList>
    </citation>
    <scope>NUCLEOTIDE SEQUENCE [LARGE SCALE MRNA]</scope>
    <source>
        <strain>Berkeley</strain>
        <tissue>Embryo</tissue>
    </source>
</reference>
<reference key="4">
    <citation type="journal article" date="2002" name="Genes Dev.">
        <title>A Drosophila fragile X protein interacts with components of RNAi and ribosomal proteins.</title>
        <authorList>
            <person name="Ishizuka A."/>
            <person name="Siomi M.C."/>
            <person name="Siomi H."/>
        </authorList>
    </citation>
    <scope>INTERACTION WITH FMR1</scope>
</reference>
<reference key="5">
    <citation type="journal article" date="2013" name="Nature">
        <title>Structures of the human and Drosophila 80S ribosome.</title>
        <authorList>
            <person name="Anger A.M."/>
            <person name="Armache J.P."/>
            <person name="Berninghausen O."/>
            <person name="Habeck M."/>
            <person name="Subklewe M."/>
            <person name="Wilson D.N."/>
            <person name="Beckmann R."/>
        </authorList>
    </citation>
    <scope>STRUCTURE BY ELECTRON MICROSCOPY (6.0 ANGSTROMS) OF THE 80S RIBOSOME</scope>
</reference>
<feature type="chain" id="PRO_0000291559" description="Large ribosomal subunit protein uL18">
    <location>
        <begin position="1"/>
        <end position="299"/>
    </location>
</feature>
<name>RL5_DROME</name>
<organism>
    <name type="scientific">Drosophila melanogaster</name>
    <name type="common">Fruit fly</name>
    <dbReference type="NCBI Taxonomy" id="7227"/>
    <lineage>
        <taxon>Eukaryota</taxon>
        <taxon>Metazoa</taxon>
        <taxon>Ecdysozoa</taxon>
        <taxon>Arthropoda</taxon>
        <taxon>Hexapoda</taxon>
        <taxon>Insecta</taxon>
        <taxon>Pterygota</taxon>
        <taxon>Neoptera</taxon>
        <taxon>Endopterygota</taxon>
        <taxon>Diptera</taxon>
        <taxon>Brachycera</taxon>
        <taxon>Muscomorpha</taxon>
        <taxon>Ephydroidea</taxon>
        <taxon>Drosophilidae</taxon>
        <taxon>Drosophila</taxon>
        <taxon>Sophophora</taxon>
    </lineage>
</organism>
<keyword id="KW-0002">3D-structure</keyword>
<keyword id="KW-0963">Cytoplasm</keyword>
<keyword id="KW-0539">Nucleus</keyword>
<keyword id="KW-1185">Reference proteome</keyword>
<keyword id="KW-0687">Ribonucleoprotein</keyword>
<keyword id="KW-0689">Ribosomal protein</keyword>
<keyword id="KW-0694">RNA-binding</keyword>
<keyword id="KW-0699">rRNA-binding</keyword>
<sequence length="299" mass="34037">MGFVKVVKNKQYFKRYQVKFRRRREGKTDYYARKRLTFQDKNKYNTPKYRLIVRLSNKDITVQIAYARIEGDRVVCAAYSHELPKYGIQVGLTNYAAAYCTGLLVARRVLNKLGLDSLYAGCTEVTGEEFNVEPVDDGPGAFRCFLDVGLARTTTGARVFGAMKGAVDGGLNIPHSVKRFPGYSAETKSFNADVHRAHIFGQHVADYMRSLEEEDEESFKRQFSRYIKLGIRADDLEDIYKKAHQAIRNDPTHKVTAKKSSAVTKKRWNAKKLTNEQRKTKIAAHKAAYVAKLQSETEA</sequence>